<sequence>MTEYKLVVVGAGGVGKSALTIQLIQNHFVDEYDPTIEDSYRKQVVIDGETCLLDILDTAGQEEYSAMRDQYMRTGEGFLCVFAINNSKSFADINLYREQIKRVKDSDDVPMVLVGNKCDLPTRTVDTKQAHELAKSYGIPFIETSAKTRQGVEDAFYTLVREIRQYRMKKLNSSEDGTQGCMGLPCVVM</sequence>
<name>RASN_RAT</name>
<gene>
    <name type="primary">Nras</name>
</gene>
<protein>
    <recommendedName>
        <fullName>GTPase NRas</fullName>
        <ecNumber evidence="4">3.6.5.2</ecNumber>
    </recommendedName>
    <alternativeName>
        <fullName>Transforming protein N-Ras</fullName>
    </alternativeName>
</protein>
<dbReference type="EC" id="3.6.5.2" evidence="4"/>
<dbReference type="EMBL" id="X68394">
    <property type="protein sequence ID" value="CAA48460.1"/>
    <property type="molecule type" value="Genomic_DNA"/>
</dbReference>
<dbReference type="EMBL" id="BC098659">
    <property type="protein sequence ID" value="AAH98659.1"/>
    <property type="molecule type" value="mRNA"/>
</dbReference>
<dbReference type="PIR" id="I83212">
    <property type="entry name" value="S26621"/>
</dbReference>
<dbReference type="RefSeq" id="NP_542944.1">
    <property type="nucleotide sequence ID" value="NM_080766.2"/>
</dbReference>
<dbReference type="RefSeq" id="XP_006233121.1">
    <property type="nucleotide sequence ID" value="XM_006233059.3"/>
</dbReference>
<dbReference type="SMR" id="Q04970"/>
<dbReference type="BioGRID" id="246744">
    <property type="interactions" value="1"/>
</dbReference>
<dbReference type="FunCoup" id="Q04970">
    <property type="interactions" value="3863"/>
</dbReference>
<dbReference type="IntAct" id="Q04970">
    <property type="interactions" value="6"/>
</dbReference>
<dbReference type="MINT" id="Q04970"/>
<dbReference type="STRING" id="10116.ENSRNOP00000036381"/>
<dbReference type="PhosphoSitePlus" id="Q04970"/>
<dbReference type="SwissPalm" id="Q04970"/>
<dbReference type="jPOST" id="Q04970"/>
<dbReference type="PaxDb" id="10116-ENSRNOP00000036381"/>
<dbReference type="Ensembl" id="ENSRNOT00000098182.1">
    <property type="protein sequence ID" value="ENSRNOP00000078755.1"/>
    <property type="gene ID" value="ENSRNOG00000023079.4"/>
</dbReference>
<dbReference type="GeneID" id="24605"/>
<dbReference type="KEGG" id="rno:24605"/>
<dbReference type="UCSC" id="RGD:3205">
    <property type="organism name" value="rat"/>
</dbReference>
<dbReference type="AGR" id="RGD:3205"/>
<dbReference type="CTD" id="4893"/>
<dbReference type="RGD" id="3205">
    <property type="gene designation" value="Nras"/>
</dbReference>
<dbReference type="eggNOG" id="KOG0395">
    <property type="taxonomic scope" value="Eukaryota"/>
</dbReference>
<dbReference type="GeneTree" id="ENSGT00940000158947"/>
<dbReference type="HOGENOM" id="CLU_041217_9_8_1"/>
<dbReference type="InParanoid" id="Q04970"/>
<dbReference type="OMA" id="RAVDIWG"/>
<dbReference type="OrthoDB" id="20502at9989"/>
<dbReference type="PhylomeDB" id="Q04970"/>
<dbReference type="TreeFam" id="TF312796"/>
<dbReference type="Reactome" id="R-RNO-1169092">
    <property type="pathway name" value="Activation of RAS in B cells"/>
</dbReference>
<dbReference type="Reactome" id="R-RNO-1250347">
    <property type="pathway name" value="SHC1 events in ERBB4 signaling"/>
</dbReference>
<dbReference type="Reactome" id="R-RNO-1433557">
    <property type="pathway name" value="Signaling by SCF-KIT"/>
</dbReference>
<dbReference type="Reactome" id="R-RNO-171007">
    <property type="pathway name" value="p38MAPK events"/>
</dbReference>
<dbReference type="Reactome" id="R-RNO-179812">
    <property type="pathway name" value="GRB2 events in EGFR signaling"/>
</dbReference>
<dbReference type="Reactome" id="R-RNO-180336">
    <property type="pathway name" value="SHC1 events in EGFR signaling"/>
</dbReference>
<dbReference type="Reactome" id="R-RNO-186763">
    <property type="pathway name" value="Downstream signal transduction"/>
</dbReference>
<dbReference type="Reactome" id="R-RNO-1963640">
    <property type="pathway name" value="GRB2 events in ERBB2 signaling"/>
</dbReference>
<dbReference type="Reactome" id="R-RNO-210993">
    <property type="pathway name" value="Tie2 Signaling"/>
</dbReference>
<dbReference type="Reactome" id="R-RNO-2179392">
    <property type="pathway name" value="EGFR Transactivation by Gastrin"/>
</dbReference>
<dbReference type="Reactome" id="R-RNO-2424491">
    <property type="pathway name" value="DAP12 signaling"/>
</dbReference>
<dbReference type="Reactome" id="R-RNO-2871796">
    <property type="pathway name" value="FCERI mediated MAPK activation"/>
</dbReference>
<dbReference type="Reactome" id="R-RNO-375165">
    <property type="pathway name" value="NCAM signaling for neurite out-growth"/>
</dbReference>
<dbReference type="Reactome" id="R-RNO-5218921">
    <property type="pathway name" value="VEGFR2 mediated cell proliferation"/>
</dbReference>
<dbReference type="Reactome" id="R-RNO-5621575">
    <property type="pathway name" value="CD209 (DC-SIGN) signaling"/>
</dbReference>
<dbReference type="Reactome" id="R-RNO-5654688">
    <property type="pathway name" value="SHC-mediated cascade:FGFR1"/>
</dbReference>
<dbReference type="Reactome" id="R-RNO-5654693">
    <property type="pathway name" value="FRS-mediated FGFR1 signaling"/>
</dbReference>
<dbReference type="Reactome" id="R-RNO-5654699">
    <property type="pathway name" value="SHC-mediated cascade:FGFR2"/>
</dbReference>
<dbReference type="Reactome" id="R-RNO-5654700">
    <property type="pathway name" value="FRS-mediated FGFR2 signaling"/>
</dbReference>
<dbReference type="Reactome" id="R-RNO-5654704">
    <property type="pathway name" value="SHC-mediated cascade:FGFR3"/>
</dbReference>
<dbReference type="Reactome" id="R-RNO-5654706">
    <property type="pathway name" value="FRS-mediated FGFR3 signaling"/>
</dbReference>
<dbReference type="Reactome" id="R-RNO-5654712">
    <property type="pathway name" value="FRS-mediated FGFR4 signaling"/>
</dbReference>
<dbReference type="Reactome" id="R-RNO-5654719">
    <property type="pathway name" value="SHC-mediated cascade:FGFR4"/>
</dbReference>
<dbReference type="Reactome" id="R-RNO-5658442">
    <property type="pathway name" value="Regulation of RAS by GAPs"/>
</dbReference>
<dbReference type="Reactome" id="R-RNO-5673000">
    <property type="pathway name" value="RAF activation"/>
</dbReference>
<dbReference type="Reactome" id="R-RNO-5673001">
    <property type="pathway name" value="RAF/MAP kinase cascade"/>
</dbReference>
<dbReference type="Reactome" id="R-RNO-5674135">
    <property type="pathway name" value="MAP2K and MAPK activation"/>
</dbReference>
<dbReference type="Reactome" id="R-RNO-5675221">
    <property type="pathway name" value="Negative regulation of MAPK pathway"/>
</dbReference>
<dbReference type="Reactome" id="R-RNO-6798695">
    <property type="pathway name" value="Neutrophil degranulation"/>
</dbReference>
<dbReference type="Reactome" id="R-RNO-8849471">
    <property type="pathway name" value="PTK6 Regulates RHO GTPases, RAS GTPase and MAP kinases"/>
</dbReference>
<dbReference type="Reactome" id="R-RNO-8851805">
    <property type="pathway name" value="MET activates RAS signaling"/>
</dbReference>
<dbReference type="Reactome" id="R-RNO-9607240">
    <property type="pathway name" value="FLT3 Signaling"/>
</dbReference>
<dbReference type="Reactome" id="R-RNO-9634635">
    <property type="pathway name" value="Estrogen-stimulated signaling through PRKCZ"/>
</dbReference>
<dbReference type="Reactome" id="R-RNO-9648002">
    <property type="pathway name" value="RAS processing"/>
</dbReference>
<dbReference type="PRO" id="PR:Q04970"/>
<dbReference type="Proteomes" id="UP000002494">
    <property type="component" value="Chromosome 2"/>
</dbReference>
<dbReference type="Bgee" id="ENSRNOG00000023079">
    <property type="expression patterns" value="Expressed in lung and 19 other cell types or tissues"/>
</dbReference>
<dbReference type="GO" id="GO:0005794">
    <property type="term" value="C:Golgi apparatus"/>
    <property type="evidence" value="ECO:0000266"/>
    <property type="project" value="RGD"/>
</dbReference>
<dbReference type="GO" id="GO:0000139">
    <property type="term" value="C:Golgi membrane"/>
    <property type="evidence" value="ECO:0007669"/>
    <property type="project" value="UniProtKB-SubCell"/>
</dbReference>
<dbReference type="GO" id="GO:0016020">
    <property type="term" value="C:membrane"/>
    <property type="evidence" value="ECO:0000266"/>
    <property type="project" value="RGD"/>
</dbReference>
<dbReference type="GO" id="GO:0005886">
    <property type="term" value="C:plasma membrane"/>
    <property type="evidence" value="ECO:0000318"/>
    <property type="project" value="GO_Central"/>
</dbReference>
<dbReference type="GO" id="GO:0003925">
    <property type="term" value="F:G protein activity"/>
    <property type="evidence" value="ECO:0007669"/>
    <property type="project" value="UniProtKB-EC"/>
</dbReference>
<dbReference type="GO" id="GO:0019003">
    <property type="term" value="F:GDP binding"/>
    <property type="evidence" value="ECO:0000318"/>
    <property type="project" value="GO_Central"/>
</dbReference>
<dbReference type="GO" id="GO:0005525">
    <property type="term" value="F:GTP binding"/>
    <property type="evidence" value="ECO:0000318"/>
    <property type="project" value="GO_Central"/>
</dbReference>
<dbReference type="GO" id="GO:0003924">
    <property type="term" value="F:GTPase activity"/>
    <property type="evidence" value="ECO:0000250"/>
    <property type="project" value="UniProtKB"/>
</dbReference>
<dbReference type="GO" id="GO:0044877">
    <property type="term" value="F:protein-containing complex binding"/>
    <property type="evidence" value="ECO:0000266"/>
    <property type="project" value="RGD"/>
</dbReference>
<dbReference type="GO" id="GO:0042832">
    <property type="term" value="P:defense response to protozoan"/>
    <property type="evidence" value="ECO:0000266"/>
    <property type="project" value="RGD"/>
</dbReference>
<dbReference type="GO" id="GO:0045445">
    <property type="term" value="P:myoblast differentiation"/>
    <property type="evidence" value="ECO:0000270"/>
    <property type="project" value="RGD"/>
</dbReference>
<dbReference type="GO" id="GO:0048642">
    <property type="term" value="P:negative regulation of skeletal muscle tissue development"/>
    <property type="evidence" value="ECO:0000266"/>
    <property type="project" value="RGD"/>
</dbReference>
<dbReference type="GO" id="GO:0045766">
    <property type="term" value="P:positive regulation of angiogenesis"/>
    <property type="evidence" value="ECO:0000266"/>
    <property type="project" value="RGD"/>
</dbReference>
<dbReference type="GO" id="GO:0001938">
    <property type="term" value="P:positive regulation of endothelial cell proliferation"/>
    <property type="evidence" value="ECO:0000266"/>
    <property type="project" value="RGD"/>
</dbReference>
<dbReference type="GO" id="GO:0048146">
    <property type="term" value="P:positive regulation of fibroblast proliferation"/>
    <property type="evidence" value="ECO:0000266"/>
    <property type="project" value="RGD"/>
</dbReference>
<dbReference type="GO" id="GO:0032729">
    <property type="term" value="P:positive regulation of type II interferon production"/>
    <property type="evidence" value="ECO:0000266"/>
    <property type="project" value="RGD"/>
</dbReference>
<dbReference type="GO" id="GO:0007265">
    <property type="term" value="P:Ras protein signal transduction"/>
    <property type="evidence" value="ECO:0000250"/>
    <property type="project" value="UniProtKB"/>
</dbReference>
<dbReference type="GO" id="GO:0010468">
    <property type="term" value="P:regulation of gene expression"/>
    <property type="evidence" value="ECO:0000266"/>
    <property type="project" value="RGD"/>
</dbReference>
<dbReference type="GO" id="GO:0050852">
    <property type="term" value="P:T cell receptor signaling pathway"/>
    <property type="evidence" value="ECO:0000266"/>
    <property type="project" value="RGD"/>
</dbReference>
<dbReference type="CDD" id="cd04138">
    <property type="entry name" value="H_N_K_Ras_like"/>
    <property type="match status" value="1"/>
</dbReference>
<dbReference type="FunFam" id="3.40.50.300:FF:000096">
    <property type="entry name" value="KRAS proto-oncogene, GTPase"/>
    <property type="match status" value="1"/>
</dbReference>
<dbReference type="Gene3D" id="3.40.50.300">
    <property type="entry name" value="P-loop containing nucleotide triphosphate hydrolases"/>
    <property type="match status" value="1"/>
</dbReference>
<dbReference type="InterPro" id="IPR027417">
    <property type="entry name" value="P-loop_NTPase"/>
</dbReference>
<dbReference type="InterPro" id="IPR005225">
    <property type="entry name" value="Small_GTP-bd"/>
</dbReference>
<dbReference type="InterPro" id="IPR001806">
    <property type="entry name" value="Small_GTPase"/>
</dbReference>
<dbReference type="InterPro" id="IPR020849">
    <property type="entry name" value="Small_GTPase_Ras-type"/>
</dbReference>
<dbReference type="NCBIfam" id="TIGR00231">
    <property type="entry name" value="small_GTP"/>
    <property type="match status" value="1"/>
</dbReference>
<dbReference type="PANTHER" id="PTHR24070">
    <property type="entry name" value="RAS, DI-RAS, AND RHEB FAMILY MEMBERS OF SMALL GTPASE SUPERFAMILY"/>
    <property type="match status" value="1"/>
</dbReference>
<dbReference type="Pfam" id="PF00071">
    <property type="entry name" value="Ras"/>
    <property type="match status" value="1"/>
</dbReference>
<dbReference type="PRINTS" id="PR00449">
    <property type="entry name" value="RASTRNSFRMNG"/>
</dbReference>
<dbReference type="SMART" id="SM00175">
    <property type="entry name" value="RAB"/>
    <property type="match status" value="1"/>
</dbReference>
<dbReference type="SMART" id="SM00173">
    <property type="entry name" value="RAS"/>
    <property type="match status" value="1"/>
</dbReference>
<dbReference type="SMART" id="SM00174">
    <property type="entry name" value="RHO"/>
    <property type="match status" value="1"/>
</dbReference>
<dbReference type="SUPFAM" id="SSF52540">
    <property type="entry name" value="P-loop containing nucleoside triphosphate hydrolases"/>
    <property type="match status" value="1"/>
</dbReference>
<dbReference type="PROSITE" id="PS51421">
    <property type="entry name" value="RAS"/>
    <property type="match status" value="1"/>
</dbReference>
<organism>
    <name type="scientific">Rattus norvegicus</name>
    <name type="common">Rat</name>
    <dbReference type="NCBI Taxonomy" id="10116"/>
    <lineage>
        <taxon>Eukaryota</taxon>
        <taxon>Metazoa</taxon>
        <taxon>Chordata</taxon>
        <taxon>Craniata</taxon>
        <taxon>Vertebrata</taxon>
        <taxon>Euteleostomi</taxon>
        <taxon>Mammalia</taxon>
        <taxon>Eutheria</taxon>
        <taxon>Euarchontoglires</taxon>
        <taxon>Glires</taxon>
        <taxon>Rodentia</taxon>
        <taxon>Myomorpha</taxon>
        <taxon>Muroidea</taxon>
        <taxon>Muridae</taxon>
        <taxon>Murinae</taxon>
        <taxon>Rattus</taxon>
    </lineage>
</organism>
<comment type="function">
    <text evidence="2">Ras proteins bind GDP/GTP and possess intrinsic GTPase activity.</text>
</comment>
<comment type="catalytic activity">
    <reaction evidence="4">
        <text>GTP + H2O = GDP + phosphate + H(+)</text>
        <dbReference type="Rhea" id="RHEA:19669"/>
        <dbReference type="ChEBI" id="CHEBI:15377"/>
        <dbReference type="ChEBI" id="CHEBI:15378"/>
        <dbReference type="ChEBI" id="CHEBI:37565"/>
        <dbReference type="ChEBI" id="CHEBI:43474"/>
        <dbReference type="ChEBI" id="CHEBI:58189"/>
        <dbReference type="EC" id="3.6.5.2"/>
    </reaction>
</comment>
<comment type="activity regulation">
    <text>Alternates between an inactive form bound to GDP and an active form bound to GTP. Activated by a guanine nucleotide-exchange factor (GEF) and inactivated by a GTPase-activating protein (GAP).</text>
</comment>
<comment type="subunit">
    <text evidence="2 6">Interacts (active GTP-bound form preferentially) with RGS14 (PubMed:19319189). Interacts (active GTP-bound form) with RASSF7 (By similarity). Interacts (active GTP-bound form) with both SHOC2 and PP1c (all isoforms) to form a tertiary complex; SHOC2 and PP1c preferably bind M-Ras/MRAS, but they also bind K-Ras/KRAS, N-Ras/NRAS and H-Ras/HRAS (By similarity).</text>
</comment>
<comment type="subcellular location">
    <subcellularLocation>
        <location evidence="2">Cell membrane</location>
        <topology evidence="2">Lipid-anchor</topology>
        <orientation evidence="2">Cytoplasmic side</orientation>
    </subcellularLocation>
    <subcellularLocation>
        <location evidence="2">Golgi apparatus membrane</location>
        <topology evidence="2">Lipid-anchor</topology>
    </subcellularLocation>
    <text evidence="2">Shuttles between the plasma membrane and the Golgi apparatus.</text>
</comment>
<comment type="PTM">
    <text evidence="2">Palmitoylated by the ZDHHC9-GOLGA7 complex. Depalmitoylated by ABHD17A, ABHD17B and ABHD17C. A continuous cycle of de- and re-palmitoylation regulates rapid exchange between plasma membrane and Golgi.</text>
</comment>
<comment type="PTM">
    <text evidence="4">Acetylation at Lys-104 prevents interaction with guanine nucleotide exchange factors (GEFs).</text>
</comment>
<comment type="PTM">
    <text evidence="3">Ubiquitinated by the BCR(LZTR1) E3 ubiquitin ligase complex at Lys-170 in a non-degradative manner, leading to inhibit Ras signaling by decreasing Ras association with membranes.</text>
</comment>
<comment type="PTM">
    <text evidence="2">Phosphorylation at Ser-89 enhances NRAS association with its downstream effectors.</text>
</comment>
<comment type="similarity">
    <text evidence="7">Belongs to the small GTPase superfamily. Ras family.</text>
</comment>
<keyword id="KW-0007">Acetylation</keyword>
<keyword id="KW-1003">Cell membrane</keyword>
<keyword id="KW-0333">Golgi apparatus</keyword>
<keyword id="KW-0342">GTP-binding</keyword>
<keyword id="KW-0378">Hydrolase</keyword>
<keyword id="KW-1017">Isopeptide bond</keyword>
<keyword id="KW-0449">Lipoprotein</keyword>
<keyword id="KW-0472">Membrane</keyword>
<keyword id="KW-0488">Methylation</keyword>
<keyword id="KW-0547">Nucleotide-binding</keyword>
<keyword id="KW-0564">Palmitate</keyword>
<keyword id="KW-0597">Phosphoprotein</keyword>
<keyword id="KW-0636">Prenylation</keyword>
<keyword id="KW-0656">Proto-oncogene</keyword>
<keyword id="KW-1185">Reference proteome</keyword>
<keyword id="KW-0832">Ubl conjugation</keyword>
<proteinExistence type="evidence at protein level"/>
<accession>Q04970</accession>
<accession>Q4KMB1</accession>
<reference key="1">
    <citation type="journal article" date="1993" name="Gene">
        <title>Sequence of the Escherichia coli K-12 edd and eda genes of the Entner-Doudoroff pathway.</title>
        <authorList>
            <person name="Carter A.T."/>
            <person name="Pearson B.M."/>
            <person name="Dickinson J.R."/>
            <person name="Lancashire W.E."/>
        </authorList>
    </citation>
    <scope>NUCLEOTIDE SEQUENCE</scope>
</reference>
<reference key="2">
    <citation type="journal article" date="1994" name="Carcinogenesis">
        <title>The rat N-ras gene; interference of pseudogenes with the detection of activating point mutations.</title>
        <authorList>
            <person name="van Kranen H.J."/>
            <person name="van Steeg H."/>
            <person name="Schoren L."/>
            <person name="Faessen P."/>
            <person name="de Vries A."/>
            <person name="van Iersel P.W."/>
            <person name="van Kreijl C.F."/>
        </authorList>
    </citation>
    <scope>NUCLEOTIDE SEQUENCE [GENOMIC DNA]</scope>
    <source>
        <strain>Sprague-Dawley</strain>
    </source>
</reference>
<reference key="3">
    <citation type="journal article" date="2004" name="Genome Res.">
        <title>The status, quality, and expansion of the NIH full-length cDNA project: the Mammalian Gene Collection (MGC).</title>
        <authorList>
            <consortium name="The MGC Project Team"/>
        </authorList>
    </citation>
    <scope>NUCLEOTIDE SEQUENCE [LARGE SCALE MRNA]</scope>
    <source>
        <tissue>Spleen</tissue>
    </source>
</reference>
<reference key="4">
    <citation type="journal article" date="1991" name="Mol. Carcinog.">
        <title>Possible involvement of c-myc but not ras genes in hepatocellular carcinomas developing after spontaneous hepatitis in LEC rats.</title>
        <authorList>
            <person name="Fujimoto Y."/>
            <person name="Ishizaka Y."/>
            <person name="Tahira T."/>
            <person name="Sone H."/>
            <person name="Takahashi H."/>
            <person name="Enomoto K."/>
            <person name="Mori M."/>
            <person name="Sugimura T."/>
            <person name="Nagao M."/>
        </authorList>
    </citation>
    <scope>NUCLEOTIDE SEQUENCE OF 1-96</scope>
</reference>
<reference key="5">
    <citation type="journal article" date="1990" name="Proc. Natl. Acad. Sci. U.S.A.">
        <title>Characterization of c-Ki-ras and N-ras oncogenes in aflatoxin B1-induced rat liver tumors.</title>
        <authorList>
            <person name="McMahon G."/>
            <person name="Davis E.F."/>
            <person name="Huber L.J."/>
            <person name="Kim Y."/>
            <person name="Wogan G.N."/>
        </authorList>
    </citation>
    <scope>NUCLEOTIDE SEQUENCE OF 8-22</scope>
</reference>
<reference key="6">
    <citation type="journal article" date="2009" name="PLoS ONE">
        <title>Regulator of G-protein signaling 14 (RGS14) is a selective H-Ras effector.</title>
        <authorList>
            <person name="Willard F.S."/>
            <person name="Willard M.D."/>
            <person name="Kimple A.J."/>
            <person name="Soundararajan M."/>
            <person name="Oestreich E.A."/>
            <person name="Li X."/>
            <person name="Sowa N.A."/>
            <person name="Kimple R.J."/>
            <person name="Doyle D.A."/>
            <person name="Der C.J."/>
            <person name="Zylka M.J."/>
            <person name="Snider W.D."/>
            <person name="Siderovski D.P."/>
        </authorList>
    </citation>
    <scope>INTERACTION WITH RGS14</scope>
</reference>
<evidence type="ECO:0000250" key="1"/>
<evidence type="ECO:0000250" key="2">
    <source>
        <dbReference type="UniProtKB" id="P01111"/>
    </source>
</evidence>
<evidence type="ECO:0000250" key="3">
    <source>
        <dbReference type="UniProtKB" id="P01112"/>
    </source>
</evidence>
<evidence type="ECO:0000250" key="4">
    <source>
        <dbReference type="UniProtKB" id="P01116"/>
    </source>
</evidence>
<evidence type="ECO:0000255" key="5"/>
<evidence type="ECO:0000269" key="6">
    <source>
    </source>
</evidence>
<evidence type="ECO:0000305" key="7"/>
<feature type="chain" id="PRO_0000043014" description="GTPase NRas">
    <location>
        <begin position="1"/>
        <end position="186"/>
    </location>
</feature>
<feature type="propeptide" id="PRO_0000043015" description="Removed in mature form" evidence="1">
    <location>
        <begin position="187"/>
        <end position="189"/>
    </location>
</feature>
<feature type="region of interest" description="Hypervariable region" evidence="1">
    <location>
        <begin position="166"/>
        <end position="185"/>
    </location>
</feature>
<feature type="short sequence motif" description="Effector region">
    <location>
        <begin position="32"/>
        <end position="40"/>
    </location>
</feature>
<feature type="binding site" evidence="2">
    <location>
        <begin position="10"/>
        <end position="18"/>
    </location>
    <ligand>
        <name>GTP</name>
        <dbReference type="ChEBI" id="CHEBI:37565"/>
    </ligand>
</feature>
<feature type="binding site" evidence="2">
    <location>
        <begin position="29"/>
        <end position="30"/>
    </location>
    <ligand>
        <name>GTP</name>
        <dbReference type="ChEBI" id="CHEBI:37565"/>
    </ligand>
</feature>
<feature type="binding site" evidence="5">
    <location>
        <begin position="57"/>
        <end position="61"/>
    </location>
    <ligand>
        <name>GTP</name>
        <dbReference type="ChEBI" id="CHEBI:37565"/>
    </ligand>
</feature>
<feature type="binding site" evidence="2">
    <location>
        <begin position="116"/>
        <end position="119"/>
    </location>
    <ligand>
        <name>GTP</name>
        <dbReference type="ChEBI" id="CHEBI:37565"/>
    </ligand>
</feature>
<feature type="modified residue" description="Phosphoserine" evidence="2">
    <location>
        <position position="89"/>
    </location>
</feature>
<feature type="lipid moiety-binding region" description="S-palmitoyl cysteine" evidence="2">
    <location>
        <position position="181"/>
    </location>
</feature>
<feature type="lipid moiety-binding region" description="S-farnesyl cysteine" evidence="2">
    <location>
        <position position="186"/>
    </location>
</feature>
<feature type="cross-link" description="Glycyl lysine isopeptide (Lys-Gly) (interchain with G-Cter in ubiquitin)" evidence="2">
    <location>
        <position position="170"/>
    </location>
</feature>